<accession>P62900</accession>
<accession>P12947</accession>
<gene>
    <name type="primary">Rpl31</name>
</gene>
<proteinExistence type="evidence at protein level"/>
<organism>
    <name type="scientific">Mus musculus</name>
    <name type="common">Mouse</name>
    <dbReference type="NCBI Taxonomy" id="10090"/>
    <lineage>
        <taxon>Eukaryota</taxon>
        <taxon>Metazoa</taxon>
        <taxon>Chordata</taxon>
        <taxon>Craniata</taxon>
        <taxon>Vertebrata</taxon>
        <taxon>Euteleostomi</taxon>
        <taxon>Mammalia</taxon>
        <taxon>Eutheria</taxon>
        <taxon>Euarchontoglires</taxon>
        <taxon>Glires</taxon>
        <taxon>Rodentia</taxon>
        <taxon>Myomorpha</taxon>
        <taxon>Muroidea</taxon>
        <taxon>Muridae</taxon>
        <taxon>Murinae</taxon>
        <taxon>Mus</taxon>
        <taxon>Mus</taxon>
    </lineage>
</organism>
<protein>
    <recommendedName>
        <fullName evidence="3">Large ribosomal subunit protein eL31</fullName>
    </recommendedName>
    <alternativeName>
        <fullName>60S ribosomal protein L31</fullName>
    </alternativeName>
</protein>
<evidence type="ECO:0000250" key="1">
    <source>
        <dbReference type="UniProtKB" id="P62899"/>
    </source>
</evidence>
<evidence type="ECO:0000269" key="2">
    <source>
    </source>
</evidence>
<evidence type="ECO:0000305" key="3"/>
<evidence type="ECO:0007744" key="4">
    <source>
        <dbReference type="PDB" id="7CPU"/>
    </source>
</evidence>
<evidence type="ECO:0007744" key="5">
    <source>
        <dbReference type="PDB" id="7CPV"/>
    </source>
</evidence>
<evidence type="ECO:0007744" key="6">
    <source>
    </source>
</evidence>
<evidence type="ECO:0007744" key="7">
    <source>
    </source>
</evidence>
<reference key="1">
    <citation type="submission" date="2001-03" db="EMBL/GenBank/DDBJ databases">
        <title>Identifying different gene expression using subtraction suppression hybridization.</title>
        <authorList>
            <person name="Zhao S."/>
            <person name="Zhang Y."/>
            <person name="Yu Y."/>
            <person name="Yang T."/>
            <person name="Ge S."/>
            <person name="Geng Y."/>
            <person name="Cui C."/>
        </authorList>
    </citation>
    <scope>NUCLEOTIDE SEQUENCE [MRNA]</scope>
    <source>
        <strain>BALB/cJ</strain>
    </source>
</reference>
<reference key="2">
    <citation type="journal article" date="2005" name="Science">
        <title>The transcriptional landscape of the mammalian genome.</title>
        <authorList>
            <person name="Carninci P."/>
            <person name="Kasukawa T."/>
            <person name="Katayama S."/>
            <person name="Gough J."/>
            <person name="Frith M.C."/>
            <person name="Maeda N."/>
            <person name="Oyama R."/>
            <person name="Ravasi T."/>
            <person name="Lenhard B."/>
            <person name="Wells C."/>
            <person name="Kodzius R."/>
            <person name="Shimokawa K."/>
            <person name="Bajic V.B."/>
            <person name="Brenner S.E."/>
            <person name="Batalov S."/>
            <person name="Forrest A.R."/>
            <person name="Zavolan M."/>
            <person name="Davis M.J."/>
            <person name="Wilming L.G."/>
            <person name="Aidinis V."/>
            <person name="Allen J.E."/>
            <person name="Ambesi-Impiombato A."/>
            <person name="Apweiler R."/>
            <person name="Aturaliya R.N."/>
            <person name="Bailey T.L."/>
            <person name="Bansal M."/>
            <person name="Baxter L."/>
            <person name="Beisel K.W."/>
            <person name="Bersano T."/>
            <person name="Bono H."/>
            <person name="Chalk A.M."/>
            <person name="Chiu K.P."/>
            <person name="Choudhary V."/>
            <person name="Christoffels A."/>
            <person name="Clutterbuck D.R."/>
            <person name="Crowe M.L."/>
            <person name="Dalla E."/>
            <person name="Dalrymple B.P."/>
            <person name="de Bono B."/>
            <person name="Della Gatta G."/>
            <person name="di Bernardo D."/>
            <person name="Down T."/>
            <person name="Engstrom P."/>
            <person name="Fagiolini M."/>
            <person name="Faulkner G."/>
            <person name="Fletcher C.F."/>
            <person name="Fukushima T."/>
            <person name="Furuno M."/>
            <person name="Futaki S."/>
            <person name="Gariboldi M."/>
            <person name="Georgii-Hemming P."/>
            <person name="Gingeras T.R."/>
            <person name="Gojobori T."/>
            <person name="Green R.E."/>
            <person name="Gustincich S."/>
            <person name="Harbers M."/>
            <person name="Hayashi Y."/>
            <person name="Hensch T.K."/>
            <person name="Hirokawa N."/>
            <person name="Hill D."/>
            <person name="Huminiecki L."/>
            <person name="Iacono M."/>
            <person name="Ikeo K."/>
            <person name="Iwama A."/>
            <person name="Ishikawa T."/>
            <person name="Jakt M."/>
            <person name="Kanapin A."/>
            <person name="Katoh M."/>
            <person name="Kawasawa Y."/>
            <person name="Kelso J."/>
            <person name="Kitamura H."/>
            <person name="Kitano H."/>
            <person name="Kollias G."/>
            <person name="Krishnan S.P."/>
            <person name="Kruger A."/>
            <person name="Kummerfeld S.K."/>
            <person name="Kurochkin I.V."/>
            <person name="Lareau L.F."/>
            <person name="Lazarevic D."/>
            <person name="Lipovich L."/>
            <person name="Liu J."/>
            <person name="Liuni S."/>
            <person name="McWilliam S."/>
            <person name="Madan Babu M."/>
            <person name="Madera M."/>
            <person name="Marchionni L."/>
            <person name="Matsuda H."/>
            <person name="Matsuzawa S."/>
            <person name="Miki H."/>
            <person name="Mignone F."/>
            <person name="Miyake S."/>
            <person name="Morris K."/>
            <person name="Mottagui-Tabar S."/>
            <person name="Mulder N."/>
            <person name="Nakano N."/>
            <person name="Nakauchi H."/>
            <person name="Ng P."/>
            <person name="Nilsson R."/>
            <person name="Nishiguchi S."/>
            <person name="Nishikawa S."/>
            <person name="Nori F."/>
            <person name="Ohara O."/>
            <person name="Okazaki Y."/>
            <person name="Orlando V."/>
            <person name="Pang K.C."/>
            <person name="Pavan W.J."/>
            <person name="Pavesi G."/>
            <person name="Pesole G."/>
            <person name="Petrovsky N."/>
            <person name="Piazza S."/>
            <person name="Reed J."/>
            <person name="Reid J.F."/>
            <person name="Ring B.Z."/>
            <person name="Ringwald M."/>
            <person name="Rost B."/>
            <person name="Ruan Y."/>
            <person name="Salzberg S.L."/>
            <person name="Sandelin A."/>
            <person name="Schneider C."/>
            <person name="Schoenbach C."/>
            <person name="Sekiguchi K."/>
            <person name="Semple C.A."/>
            <person name="Seno S."/>
            <person name="Sessa L."/>
            <person name="Sheng Y."/>
            <person name="Shibata Y."/>
            <person name="Shimada H."/>
            <person name="Shimada K."/>
            <person name="Silva D."/>
            <person name="Sinclair B."/>
            <person name="Sperling S."/>
            <person name="Stupka E."/>
            <person name="Sugiura K."/>
            <person name="Sultana R."/>
            <person name="Takenaka Y."/>
            <person name="Taki K."/>
            <person name="Tammoja K."/>
            <person name="Tan S.L."/>
            <person name="Tang S."/>
            <person name="Taylor M.S."/>
            <person name="Tegner J."/>
            <person name="Teichmann S.A."/>
            <person name="Ueda H.R."/>
            <person name="van Nimwegen E."/>
            <person name="Verardo R."/>
            <person name="Wei C.L."/>
            <person name="Yagi K."/>
            <person name="Yamanishi H."/>
            <person name="Zabarovsky E."/>
            <person name="Zhu S."/>
            <person name="Zimmer A."/>
            <person name="Hide W."/>
            <person name="Bult C."/>
            <person name="Grimmond S.M."/>
            <person name="Teasdale R.D."/>
            <person name="Liu E.T."/>
            <person name="Brusic V."/>
            <person name="Quackenbush J."/>
            <person name="Wahlestedt C."/>
            <person name="Mattick J.S."/>
            <person name="Hume D.A."/>
            <person name="Kai C."/>
            <person name="Sasaki D."/>
            <person name="Tomaru Y."/>
            <person name="Fukuda S."/>
            <person name="Kanamori-Katayama M."/>
            <person name="Suzuki M."/>
            <person name="Aoki J."/>
            <person name="Arakawa T."/>
            <person name="Iida J."/>
            <person name="Imamura K."/>
            <person name="Itoh M."/>
            <person name="Kato T."/>
            <person name="Kawaji H."/>
            <person name="Kawagashira N."/>
            <person name="Kawashima T."/>
            <person name="Kojima M."/>
            <person name="Kondo S."/>
            <person name="Konno H."/>
            <person name="Nakano K."/>
            <person name="Ninomiya N."/>
            <person name="Nishio T."/>
            <person name="Okada M."/>
            <person name="Plessy C."/>
            <person name="Shibata K."/>
            <person name="Shiraki T."/>
            <person name="Suzuki S."/>
            <person name="Tagami M."/>
            <person name="Waki K."/>
            <person name="Watahiki A."/>
            <person name="Okamura-Oho Y."/>
            <person name="Suzuki H."/>
            <person name="Kawai J."/>
            <person name="Hayashizaki Y."/>
        </authorList>
    </citation>
    <scope>NUCLEOTIDE SEQUENCE [LARGE SCALE MRNA]</scope>
    <source>
        <strain>C57BL/6J</strain>
        <tissue>Urinary bladder</tissue>
    </source>
</reference>
<reference key="3">
    <citation type="journal article" date="2004" name="Genome Res.">
        <title>The status, quality, and expansion of the NIH full-length cDNA project: the Mammalian Gene Collection (MGC).</title>
        <authorList>
            <consortium name="The MGC Project Team"/>
        </authorList>
    </citation>
    <scope>NUCLEOTIDE SEQUENCE [LARGE SCALE MRNA]</scope>
    <source>
        <strain>C57BL/6J</strain>
        <tissue>Brain</tissue>
        <tissue>Pancreas</tissue>
    </source>
</reference>
<reference key="4">
    <citation type="journal article" date="2010" name="Cell">
        <title>A tissue-specific atlas of mouse protein phosphorylation and expression.</title>
        <authorList>
            <person name="Huttlin E.L."/>
            <person name="Jedrychowski M.P."/>
            <person name="Elias J.E."/>
            <person name="Goswami T."/>
            <person name="Rad R."/>
            <person name="Beausoleil S.A."/>
            <person name="Villen J."/>
            <person name="Haas W."/>
            <person name="Sowa M.E."/>
            <person name="Gygi S.P."/>
        </authorList>
    </citation>
    <scope>PHOSPHORYLATION [LARGE SCALE ANALYSIS] AT SER-15 AND SER-98</scope>
    <scope>IDENTIFICATION BY MASS SPECTROMETRY [LARGE SCALE ANALYSIS]</scope>
    <source>
        <tissue>Brain</tissue>
        <tissue>Brown adipose tissue</tissue>
        <tissue>Heart</tissue>
        <tissue>Kidney</tissue>
        <tissue>Liver</tissue>
        <tissue>Lung</tissue>
        <tissue>Pancreas</tissue>
        <tissue>Spleen</tissue>
        <tissue>Testis</tissue>
    </source>
</reference>
<reference key="5">
    <citation type="journal article" date="2013" name="Mol. Cell">
        <title>SIRT5-mediated lysine desuccinylation impacts diverse metabolic pathways.</title>
        <authorList>
            <person name="Park J."/>
            <person name="Chen Y."/>
            <person name="Tishkoff D.X."/>
            <person name="Peng C."/>
            <person name="Tan M."/>
            <person name="Dai L."/>
            <person name="Xie Z."/>
            <person name="Zhang Y."/>
            <person name="Zwaans B.M."/>
            <person name="Skinner M.E."/>
            <person name="Lombard D.B."/>
            <person name="Zhao Y."/>
        </authorList>
    </citation>
    <scope>SUCCINYLATION [LARGE SCALE ANALYSIS] AT LYS-55; LYS-70 AND LYS-75</scope>
    <scope>IDENTIFICATION BY MASS SPECTROMETRY [LARGE SCALE ANALYSIS]</scope>
    <source>
        <tissue>Embryonic fibroblast</tissue>
        <tissue>Liver</tissue>
    </source>
</reference>
<reference evidence="4 5" key="6">
    <citation type="journal article" date="2022" name="Nature">
        <title>A male germ-cell-specific ribosome controls male fertility.</title>
        <authorList>
            <person name="Li H."/>
            <person name="Huo Y."/>
            <person name="He X."/>
            <person name="Yao L."/>
            <person name="Zhang H."/>
            <person name="Cui Y."/>
            <person name="Xiao H."/>
            <person name="Xie W."/>
            <person name="Zhang D."/>
            <person name="Wang Y."/>
            <person name="Zhang S."/>
            <person name="Tu H."/>
            <person name="Cheng Y."/>
            <person name="Guo Y."/>
            <person name="Cao X."/>
            <person name="Zhu Y."/>
            <person name="Jiang T."/>
            <person name="Guo X."/>
            <person name="Qin Y."/>
            <person name="Sha J."/>
        </authorList>
    </citation>
    <scope>STRUCTURE BY ELECTRON MICROSCOPY (3.03 ANGSTROMS) OF RIBOSOME</scope>
    <scope>FUNCTION</scope>
    <scope>SUBUNIT</scope>
    <scope>SUBCELLULAR LOCATION</scope>
</reference>
<keyword id="KW-0002">3D-structure</keyword>
<keyword id="KW-0007">Acetylation</keyword>
<keyword id="KW-0963">Cytoplasm</keyword>
<keyword id="KW-0597">Phosphoprotein</keyword>
<keyword id="KW-1185">Reference proteome</keyword>
<keyword id="KW-0687">Ribonucleoprotein</keyword>
<keyword id="KW-0689">Ribosomal protein</keyword>
<sequence length="125" mass="14463">MAPAKKGGEKKKGRSAINEVVTREYTINIHKRIHGVGFKKRAPRALKEIRKFAMKEMGTPDVRIDTRLNKAVWAKGIRNVPYRIRVRLSRKRNEDEDSPNKLYTLVTYVPVTTFKNLQTVNVDEN</sequence>
<name>RL31_MOUSE</name>
<comment type="function">
    <text evidence="2">Component of the large ribosomal subunit (PubMed:36517592). The ribosome is a large ribonucleoprotein complex responsible for the synthesis of proteins in the cell (PubMed:36517592).</text>
</comment>
<comment type="subunit">
    <text evidence="2">Component of the large ribosomal subunit.</text>
</comment>
<comment type="subcellular location">
    <subcellularLocation>
        <location evidence="2">Cytoplasm</location>
    </subcellularLocation>
</comment>
<comment type="similarity">
    <text evidence="3">Belongs to the eukaryotic ribosomal protein eL31 family.</text>
</comment>
<dbReference type="EMBL" id="AF362574">
    <property type="protein sequence ID" value="AAK70404.1"/>
    <property type="molecule type" value="mRNA"/>
</dbReference>
<dbReference type="EMBL" id="AK011236">
    <property type="protein sequence ID" value="BAB27484.1"/>
    <property type="molecule type" value="mRNA"/>
</dbReference>
<dbReference type="EMBL" id="AK014295">
    <property type="protein sequence ID" value="BAB29251.1"/>
    <property type="molecule type" value="mRNA"/>
</dbReference>
<dbReference type="EMBL" id="AK020627">
    <property type="protein sequence ID" value="BAB32156.1"/>
    <property type="molecule type" value="mRNA"/>
</dbReference>
<dbReference type="EMBL" id="BC008223">
    <property type="status" value="NOT_ANNOTATED_CDS"/>
    <property type="molecule type" value="mRNA"/>
</dbReference>
<dbReference type="EMBL" id="BC050113">
    <property type="protein sequence ID" value="AAH50113.1"/>
    <property type="molecule type" value="mRNA"/>
</dbReference>
<dbReference type="EMBL" id="BC055720">
    <property type="protein sequence ID" value="AAH55720.1"/>
    <property type="molecule type" value="mRNA"/>
</dbReference>
<dbReference type="CCDS" id="CCDS14904.1"/>
<dbReference type="RefSeq" id="NP_001239147.1">
    <property type="nucleotide sequence ID" value="NM_001252218.2"/>
</dbReference>
<dbReference type="RefSeq" id="NP_001239148.1">
    <property type="nucleotide sequence ID" value="NM_001252219.2"/>
</dbReference>
<dbReference type="RefSeq" id="NP_444487.1">
    <property type="nucleotide sequence ID" value="NM_053257.4"/>
</dbReference>
<dbReference type="PDB" id="6SWA">
    <property type="method" value="EM"/>
    <property type="resolution" value="3.10 A"/>
    <property type="chains" value="b=1-125"/>
</dbReference>
<dbReference type="PDB" id="7CPU">
    <property type="method" value="EM"/>
    <property type="resolution" value="2.82 A"/>
    <property type="chains" value="Ld=1-125"/>
</dbReference>
<dbReference type="PDB" id="7CPV">
    <property type="method" value="EM"/>
    <property type="resolution" value="3.03 A"/>
    <property type="chains" value="Ld=1-125"/>
</dbReference>
<dbReference type="PDB" id="7LS1">
    <property type="method" value="EM"/>
    <property type="resolution" value="3.30 A"/>
    <property type="chains" value="X2=1-125"/>
</dbReference>
<dbReference type="PDB" id="7LS2">
    <property type="method" value="EM"/>
    <property type="resolution" value="3.10 A"/>
    <property type="chains" value="X2=1-125"/>
</dbReference>
<dbReference type="PDBsum" id="6SWA"/>
<dbReference type="PDBsum" id="7CPU"/>
<dbReference type="PDBsum" id="7CPV"/>
<dbReference type="PDBsum" id="7LS1"/>
<dbReference type="PDBsum" id="7LS2"/>
<dbReference type="EMDB" id="EMD-10321"/>
<dbReference type="EMDB" id="EMD-23500"/>
<dbReference type="EMDB" id="EMD-23501"/>
<dbReference type="EMDB" id="EMD-30432"/>
<dbReference type="EMDB" id="EMD-30433"/>
<dbReference type="SMR" id="P62900"/>
<dbReference type="BioGRID" id="227776">
    <property type="interactions" value="86"/>
</dbReference>
<dbReference type="ComplexPortal" id="CPX-5262">
    <property type="entry name" value="60S cytosolic large ribosomal subunit"/>
</dbReference>
<dbReference type="ComplexPortal" id="CPX-7662">
    <property type="entry name" value="60S cytosolic large ribosomal subunit, testis-specific variant"/>
</dbReference>
<dbReference type="ComplexPortal" id="CPX-7663">
    <property type="entry name" value="60S cytosolic large ribosomal subunit, striated muscle variant"/>
</dbReference>
<dbReference type="FunCoup" id="P62900">
    <property type="interactions" value="2217"/>
</dbReference>
<dbReference type="IntAct" id="P62900">
    <property type="interactions" value="7"/>
</dbReference>
<dbReference type="MINT" id="P62900"/>
<dbReference type="STRING" id="10090.ENSMUSP00000083722"/>
<dbReference type="GlyGen" id="P62900">
    <property type="glycosylation" value="1 site, 1 O-linked glycan (1 site)"/>
</dbReference>
<dbReference type="iPTMnet" id="P62900"/>
<dbReference type="PhosphoSitePlus" id="P62900"/>
<dbReference type="SwissPalm" id="P62900"/>
<dbReference type="jPOST" id="P62900"/>
<dbReference type="PaxDb" id="10090-ENSMUSP00000137631"/>
<dbReference type="PeptideAtlas" id="P62900"/>
<dbReference type="ProteomicsDB" id="253251"/>
<dbReference type="Pumba" id="P62900"/>
<dbReference type="DNASU" id="114641"/>
<dbReference type="Ensembl" id="ENSMUST00000086535.12">
    <property type="protein sequence ID" value="ENSMUSP00000083722.7"/>
    <property type="gene ID" value="ENSMUSG00000073702.12"/>
</dbReference>
<dbReference type="Ensembl" id="ENSMUST00000178079.8">
    <property type="protein sequence ID" value="ENSMUSP00000136354.2"/>
    <property type="gene ID" value="ENSMUSG00000073702.12"/>
</dbReference>
<dbReference type="Ensembl" id="ENSMUST00000179954.8">
    <property type="protein sequence ID" value="ENSMUSP00000137631.2"/>
    <property type="gene ID" value="ENSMUSG00000073702.12"/>
</dbReference>
<dbReference type="GeneID" id="114641"/>
<dbReference type="KEGG" id="mmu:114641"/>
<dbReference type="UCSC" id="uc007ate.2">
    <property type="organism name" value="mouse"/>
</dbReference>
<dbReference type="AGR" id="MGI:2149632"/>
<dbReference type="CTD" id="6160"/>
<dbReference type="MGI" id="MGI:2149632">
    <property type="gene designation" value="Rpl31"/>
</dbReference>
<dbReference type="VEuPathDB" id="HostDB:ENSMUSG00000073702"/>
<dbReference type="eggNOG" id="KOG0893">
    <property type="taxonomic scope" value="Eukaryota"/>
</dbReference>
<dbReference type="GeneTree" id="ENSGT00950000183030"/>
<dbReference type="HOGENOM" id="CLU_112570_1_1_1"/>
<dbReference type="InParanoid" id="P62900"/>
<dbReference type="OMA" id="EVWKQGI"/>
<dbReference type="OrthoDB" id="9739313at2759"/>
<dbReference type="PhylomeDB" id="P62900"/>
<dbReference type="TreeFam" id="TF314858"/>
<dbReference type="Reactome" id="R-MMU-156827">
    <property type="pathway name" value="L13a-mediated translational silencing of Ceruloplasmin expression"/>
</dbReference>
<dbReference type="Reactome" id="R-MMU-1799339">
    <property type="pathway name" value="SRP-dependent cotranslational protein targeting to membrane"/>
</dbReference>
<dbReference type="Reactome" id="R-MMU-6791226">
    <property type="pathway name" value="Major pathway of rRNA processing in the nucleolus and cytosol"/>
</dbReference>
<dbReference type="Reactome" id="R-MMU-72689">
    <property type="pathway name" value="Formation of a pool of free 40S subunits"/>
</dbReference>
<dbReference type="Reactome" id="R-MMU-72706">
    <property type="pathway name" value="GTP hydrolysis and joining of the 60S ribosomal subunit"/>
</dbReference>
<dbReference type="Reactome" id="R-MMU-975956">
    <property type="pathway name" value="Nonsense Mediated Decay (NMD) independent of the Exon Junction Complex (EJC)"/>
</dbReference>
<dbReference type="Reactome" id="R-MMU-975957">
    <property type="pathway name" value="Nonsense Mediated Decay (NMD) enhanced by the Exon Junction Complex (EJC)"/>
</dbReference>
<dbReference type="BioGRID-ORCS" id="114641">
    <property type="hits" value="28 hits in 71 CRISPR screens"/>
</dbReference>
<dbReference type="CD-CODE" id="5E82D60E">
    <property type="entry name" value="Nucleolus"/>
</dbReference>
<dbReference type="CD-CODE" id="CE726F99">
    <property type="entry name" value="Postsynaptic density"/>
</dbReference>
<dbReference type="ChiTaRS" id="Rpl31">
    <property type="organism name" value="mouse"/>
</dbReference>
<dbReference type="PRO" id="PR:P62900"/>
<dbReference type="Proteomes" id="UP000000589">
    <property type="component" value="Chromosome 1"/>
</dbReference>
<dbReference type="RNAct" id="P62900">
    <property type="molecule type" value="protein"/>
</dbReference>
<dbReference type="Bgee" id="ENSMUSG00000073702">
    <property type="expression patterns" value="Expressed in cortical plate and 255 other cell types or tissues"/>
</dbReference>
<dbReference type="ExpressionAtlas" id="P62900">
    <property type="expression patterns" value="baseline and differential"/>
</dbReference>
<dbReference type="GO" id="GO:0005737">
    <property type="term" value="C:cytoplasm"/>
    <property type="evidence" value="ECO:0000314"/>
    <property type="project" value="ComplexPortal"/>
</dbReference>
<dbReference type="GO" id="GO:0005829">
    <property type="term" value="C:cytosol"/>
    <property type="evidence" value="ECO:0000304"/>
    <property type="project" value="Reactome"/>
</dbReference>
<dbReference type="GO" id="GO:0022625">
    <property type="term" value="C:cytosolic large ribosomal subunit"/>
    <property type="evidence" value="ECO:0000314"/>
    <property type="project" value="UniProtKB"/>
</dbReference>
<dbReference type="GO" id="GO:0098794">
    <property type="term" value="C:postsynapse"/>
    <property type="evidence" value="ECO:0000303"/>
    <property type="project" value="SynGO"/>
</dbReference>
<dbReference type="GO" id="GO:0005840">
    <property type="term" value="C:ribosome"/>
    <property type="evidence" value="ECO:0000303"/>
    <property type="project" value="SynGO"/>
</dbReference>
<dbReference type="GO" id="GO:0045202">
    <property type="term" value="C:synapse"/>
    <property type="evidence" value="ECO:0000314"/>
    <property type="project" value="SynGO"/>
</dbReference>
<dbReference type="GO" id="GO:0003735">
    <property type="term" value="F:structural constituent of ribosome"/>
    <property type="evidence" value="ECO:0000314"/>
    <property type="project" value="UniProtKB"/>
</dbReference>
<dbReference type="GO" id="GO:0002181">
    <property type="term" value="P:cytoplasmic translation"/>
    <property type="evidence" value="ECO:0000303"/>
    <property type="project" value="ComplexPortal"/>
</dbReference>
<dbReference type="CDD" id="cd00463">
    <property type="entry name" value="Ribosomal_L31e"/>
    <property type="match status" value="1"/>
</dbReference>
<dbReference type="FunFam" id="3.10.440.10:FF:000001">
    <property type="entry name" value="60S ribosomal protein L31"/>
    <property type="match status" value="1"/>
</dbReference>
<dbReference type="Gene3D" id="3.10.440.10">
    <property type="match status" value="1"/>
</dbReference>
<dbReference type="InterPro" id="IPR000054">
    <property type="entry name" value="Ribosomal_eL31"/>
</dbReference>
<dbReference type="InterPro" id="IPR020052">
    <property type="entry name" value="Ribosomal_eL31_CS"/>
</dbReference>
<dbReference type="InterPro" id="IPR023621">
    <property type="entry name" value="Ribosomal_eL31_dom_sf"/>
</dbReference>
<dbReference type="PANTHER" id="PTHR10956">
    <property type="entry name" value="60S RIBOSOMAL PROTEIN L31"/>
    <property type="match status" value="1"/>
</dbReference>
<dbReference type="PANTHER" id="PTHR10956:SF0">
    <property type="entry name" value="60S RIBOSOMAL PROTEIN L31"/>
    <property type="match status" value="1"/>
</dbReference>
<dbReference type="Pfam" id="PF01198">
    <property type="entry name" value="Ribosomal_L31e"/>
    <property type="match status" value="1"/>
</dbReference>
<dbReference type="SMART" id="SM01380">
    <property type="entry name" value="Ribosomal_L31e"/>
    <property type="match status" value="1"/>
</dbReference>
<dbReference type="SUPFAM" id="SSF54575">
    <property type="entry name" value="Ribosomal protein L31e"/>
    <property type="match status" value="1"/>
</dbReference>
<dbReference type="PROSITE" id="PS01144">
    <property type="entry name" value="RIBOSOMAL_L31E"/>
    <property type="match status" value="1"/>
</dbReference>
<feature type="chain" id="PRO_0000153764" description="Large ribosomal subunit protein eL31">
    <location>
        <begin position="1"/>
        <end position="125"/>
    </location>
</feature>
<feature type="modified residue" description="N-acetylmethionine" evidence="1">
    <location>
        <position position="1"/>
    </location>
</feature>
<feature type="modified residue" description="Phosphoserine" evidence="6">
    <location>
        <position position="15"/>
    </location>
</feature>
<feature type="modified residue" description="N6-succinyllysine" evidence="7">
    <location>
        <position position="55"/>
    </location>
</feature>
<feature type="modified residue" description="N6-succinyllysine" evidence="7">
    <location>
        <position position="70"/>
    </location>
</feature>
<feature type="modified residue" description="N6-acetyllysine; alternate" evidence="1">
    <location>
        <position position="75"/>
    </location>
</feature>
<feature type="modified residue" description="N6-succinyllysine; alternate" evidence="7">
    <location>
        <position position="75"/>
    </location>
</feature>
<feature type="modified residue" description="Phosphoserine" evidence="6">
    <location>
        <position position="98"/>
    </location>
</feature>